<protein>
    <recommendedName>
        <fullName evidence="1">Probable bifunctional tRNA threonylcarbamoyladenosine biosynthesis protein</fullName>
    </recommendedName>
    <domain>
        <recommendedName>
            <fullName evidence="1">tRNA N6-adenosine threonylcarbamoyltransferase</fullName>
            <ecNumber evidence="1">2.3.1.234</ecNumber>
        </recommendedName>
        <alternativeName>
            <fullName>N6-L-threonylcarbamoyladenine synthase</fullName>
            <shortName>t(6)A synthase</shortName>
        </alternativeName>
        <alternativeName>
            <fullName evidence="1">t(6)A37 threonylcarbamoyladenosine biosynthesis protein Kae1</fullName>
        </alternativeName>
        <alternativeName>
            <fullName evidence="1">tRNA threonylcarbamoyladenosine biosynthesis protein Kae1</fullName>
        </alternativeName>
    </domain>
    <domain>
        <recommendedName>
            <fullName evidence="1">Serine/threonine-protein kinase Bud32</fullName>
            <ecNumber evidence="1">2.7.11.1</ecNumber>
        </recommendedName>
    </domain>
</protein>
<comment type="function">
    <text evidence="1">Required for the formation of a threonylcarbamoyl group on adenosine at position 37 (t(6)A37) in tRNAs that read codons beginning with adenine. Is a component of the KEOPS complex that is probably involved in the transfer of the threonylcarbamoyl moiety of threonylcarbamoyl-AMP (TC-AMP) to the N6 group of A37. The Kae1 domain likely plays a direct catalytic role in this reaction. The Bud32 domain probably displays kinase activity that regulates Kae1 function.</text>
</comment>
<comment type="catalytic activity">
    <reaction evidence="1">
        <text>L-seryl-[protein] + ATP = O-phospho-L-seryl-[protein] + ADP + H(+)</text>
        <dbReference type="Rhea" id="RHEA:17989"/>
        <dbReference type="Rhea" id="RHEA-COMP:9863"/>
        <dbReference type="Rhea" id="RHEA-COMP:11604"/>
        <dbReference type="ChEBI" id="CHEBI:15378"/>
        <dbReference type="ChEBI" id="CHEBI:29999"/>
        <dbReference type="ChEBI" id="CHEBI:30616"/>
        <dbReference type="ChEBI" id="CHEBI:83421"/>
        <dbReference type="ChEBI" id="CHEBI:456216"/>
        <dbReference type="EC" id="2.7.11.1"/>
    </reaction>
</comment>
<comment type="catalytic activity">
    <reaction evidence="1">
        <text>L-threonyl-[protein] + ATP = O-phospho-L-threonyl-[protein] + ADP + H(+)</text>
        <dbReference type="Rhea" id="RHEA:46608"/>
        <dbReference type="Rhea" id="RHEA-COMP:11060"/>
        <dbReference type="Rhea" id="RHEA-COMP:11605"/>
        <dbReference type="ChEBI" id="CHEBI:15378"/>
        <dbReference type="ChEBI" id="CHEBI:30013"/>
        <dbReference type="ChEBI" id="CHEBI:30616"/>
        <dbReference type="ChEBI" id="CHEBI:61977"/>
        <dbReference type="ChEBI" id="CHEBI:456216"/>
        <dbReference type="EC" id="2.7.11.1"/>
    </reaction>
</comment>
<comment type="catalytic activity">
    <reaction evidence="1">
        <text>L-threonylcarbamoyladenylate + adenosine(37) in tRNA = N(6)-L-threonylcarbamoyladenosine(37) in tRNA + AMP + H(+)</text>
        <dbReference type="Rhea" id="RHEA:37059"/>
        <dbReference type="Rhea" id="RHEA-COMP:10162"/>
        <dbReference type="Rhea" id="RHEA-COMP:10163"/>
        <dbReference type="ChEBI" id="CHEBI:15378"/>
        <dbReference type="ChEBI" id="CHEBI:73682"/>
        <dbReference type="ChEBI" id="CHEBI:74411"/>
        <dbReference type="ChEBI" id="CHEBI:74418"/>
        <dbReference type="ChEBI" id="CHEBI:456215"/>
        <dbReference type="EC" id="2.3.1.234"/>
    </reaction>
</comment>
<comment type="cofactor">
    <cofactor evidence="1">
        <name>Fe(2+)</name>
        <dbReference type="ChEBI" id="CHEBI:29033"/>
    </cofactor>
    <text evidence="1">Binds 1 Fe(2+) ion per subunit.</text>
</comment>
<comment type="subunit">
    <text evidence="1">Component of the KEOPS complex that consists of Kae1, Bud32, Cgi121 and Pcc1; the whole complex dimerizes.</text>
</comment>
<comment type="subcellular location">
    <subcellularLocation>
        <location evidence="1">Cytoplasm</location>
    </subcellularLocation>
</comment>
<comment type="similarity">
    <text evidence="1">In the N-terminal section; belongs to the KAE1 / TsaD family.</text>
</comment>
<comment type="similarity">
    <text evidence="1">In the C-terminal section; belongs to the protein kinase superfamily. Tyr protein kinase family. BUD32 subfamily.</text>
</comment>
<reference key="1">
    <citation type="journal article" date="2004" name="Genome Res.">
        <title>Genome sequence of Haloarcula marismortui: a halophilic archaeon from the Dead Sea.</title>
        <authorList>
            <person name="Baliga N.S."/>
            <person name="Bonneau R."/>
            <person name="Facciotti M.T."/>
            <person name="Pan M."/>
            <person name="Glusman G."/>
            <person name="Deutsch E.W."/>
            <person name="Shannon P."/>
            <person name="Chiu Y."/>
            <person name="Weng R.S."/>
            <person name="Gan R.R."/>
            <person name="Hung P."/>
            <person name="Date S.V."/>
            <person name="Marcotte E."/>
            <person name="Hood L."/>
            <person name="Ng W.V."/>
        </authorList>
    </citation>
    <scope>NUCLEOTIDE SEQUENCE [LARGE SCALE GENOMIC DNA]</scope>
    <source>
        <strain>ATCC 43049 / DSM 3752 / JCM 8966 / VKM B-1809</strain>
    </source>
</reference>
<reference key="2">
    <citation type="journal article" date="1992" name="FEBS Lett.">
        <title>Nucleotide sequence of the genes for ribosomal proteins HS15 and HSH from Haloarcula marismortui: an archaeon-specific gene cluster.</title>
        <authorList>
            <person name="Arndt E."/>
            <person name="Steffens C."/>
        </authorList>
    </citation>
    <scope>NUCLEOTIDE SEQUENCE [GENOMIC DNA] OF 1-226</scope>
</reference>
<organism>
    <name type="scientific">Haloarcula marismortui (strain ATCC 43049 / DSM 3752 / JCM 8966 / VKM B-1809)</name>
    <name type="common">Halobacterium marismortui</name>
    <dbReference type="NCBI Taxonomy" id="272569"/>
    <lineage>
        <taxon>Archaea</taxon>
        <taxon>Methanobacteriati</taxon>
        <taxon>Methanobacteriota</taxon>
        <taxon>Stenosarchaea group</taxon>
        <taxon>Halobacteria</taxon>
        <taxon>Halobacteriales</taxon>
        <taxon>Haloarculaceae</taxon>
        <taxon>Haloarcula</taxon>
    </lineage>
</organism>
<evidence type="ECO:0000255" key="1">
    <source>
        <dbReference type="HAMAP-Rule" id="MF_01447"/>
    </source>
</evidence>
<evidence type="ECO:0000256" key="2">
    <source>
        <dbReference type="SAM" id="MobiDB-lite"/>
    </source>
</evidence>
<proteinExistence type="inferred from homology"/>
<sequence>MRILGIEGTAWAASASVFETPDPARVTDDDHVFIETDAYAPDSGGIHPREAAEHMGEAIPTVVETAIEHTHGRAGRDGDDSAPIDAVAFARGPGLGPCLRIVATAARAVAQRFDVPLVGVNHMVAHLEVGRHRSGFDSPVCLNASGANAHILGYRNGRYRVLGETMDTGVGNAIDKFTRHIGWSHPGGPKVEQHARDGEYHELPYVVKGMDFSFSGIMSAAKQAVDDGVPVENVCRGMEETIFAMLTEVSERALSLTGADELVLGGGVGQNARLQRMLGEMCEQREAEFYAPENRFLRDNAGMIAMLGAKMYAAGDTIAIEDSRIDSNFRPDEVAVTWRGPEESVDSYRMGGDEVQGAEATVHFDGDRVIKVRVPRSYRHPTLDERLRTERTRQEARLTSEARRNGVPTPLVRDVDPQESRIVFQRVGDTDLREGLSEGRVADVGRWLARIHDAGFVHGDPTTRNVRVGGRDEQADRTTLIDFGLGYYTQEAEDHAMDLHVLAQSLAGTADDPETLLSAAEDAYRTESDHADAVFASLDDIEGRGRYQ</sequence>
<feature type="chain" id="PRO_0000096977" description="Probable bifunctional tRNA threonylcarbamoyladenosine biosynthesis protein">
    <location>
        <begin position="1"/>
        <end position="548"/>
    </location>
</feature>
<feature type="domain" description="Protein kinase" evidence="1">
    <location>
        <begin position="349"/>
        <end position="548"/>
    </location>
</feature>
<feature type="region of interest" description="Kae1">
    <location>
        <begin position="1"/>
        <end position="338"/>
    </location>
</feature>
<feature type="region of interest" description="Disordered" evidence="2">
    <location>
        <begin position="390"/>
        <end position="413"/>
    </location>
</feature>
<feature type="compositionally biased region" description="Basic and acidic residues" evidence="2">
    <location>
        <begin position="390"/>
        <end position="404"/>
    </location>
</feature>
<feature type="active site" description="Proton acceptor; for kinase activity" evidence="1">
    <location>
        <position position="460"/>
    </location>
</feature>
<feature type="binding site" evidence="1">
    <location>
        <position position="122"/>
    </location>
    <ligand>
        <name>Fe cation</name>
        <dbReference type="ChEBI" id="CHEBI:24875"/>
    </ligand>
</feature>
<feature type="binding site" evidence="1">
    <location>
        <position position="126"/>
    </location>
    <ligand>
        <name>Fe cation</name>
        <dbReference type="ChEBI" id="CHEBI:24875"/>
    </ligand>
</feature>
<feature type="binding site" evidence="1">
    <location>
        <begin position="143"/>
        <end position="147"/>
    </location>
    <ligand>
        <name>L-threonylcarbamoyladenylate</name>
        <dbReference type="ChEBI" id="CHEBI:73682"/>
    </ligand>
</feature>
<feature type="binding site" evidence="1">
    <location>
        <position position="175"/>
    </location>
    <ligand>
        <name>L-threonylcarbamoyladenylate</name>
        <dbReference type="ChEBI" id="CHEBI:73682"/>
    </ligand>
</feature>
<feature type="binding site" evidence="1">
    <location>
        <position position="188"/>
    </location>
    <ligand>
        <name>L-threonylcarbamoyladenylate</name>
        <dbReference type="ChEBI" id="CHEBI:73682"/>
    </ligand>
</feature>
<feature type="binding site" evidence="1">
    <location>
        <position position="192"/>
    </location>
    <ligand>
        <name>L-threonylcarbamoyladenylate</name>
        <dbReference type="ChEBI" id="CHEBI:73682"/>
    </ligand>
</feature>
<feature type="binding site" evidence="1">
    <location>
        <position position="271"/>
    </location>
    <ligand>
        <name>L-threonylcarbamoyladenylate</name>
        <dbReference type="ChEBI" id="CHEBI:73682"/>
    </ligand>
</feature>
<feature type="binding site" evidence="1">
    <location>
        <position position="299"/>
    </location>
    <ligand>
        <name>Fe cation</name>
        <dbReference type="ChEBI" id="CHEBI:24875"/>
    </ligand>
</feature>
<feature type="binding site" evidence="1">
    <location>
        <begin position="355"/>
        <end position="362"/>
    </location>
    <ligand>
        <name>ATP</name>
        <dbReference type="ChEBI" id="CHEBI:30616"/>
    </ligand>
</feature>
<feature type="binding site" evidence="1">
    <location>
        <position position="371"/>
    </location>
    <ligand>
        <name>ATP</name>
        <dbReference type="ChEBI" id="CHEBI:30616"/>
    </ligand>
</feature>
<keyword id="KW-0012">Acyltransferase</keyword>
<keyword id="KW-0067">ATP-binding</keyword>
<keyword id="KW-0963">Cytoplasm</keyword>
<keyword id="KW-0408">Iron</keyword>
<keyword id="KW-0418">Kinase</keyword>
<keyword id="KW-0479">Metal-binding</keyword>
<keyword id="KW-0511">Multifunctional enzyme</keyword>
<keyword id="KW-0547">Nucleotide-binding</keyword>
<keyword id="KW-1185">Reference proteome</keyword>
<keyword id="KW-0723">Serine/threonine-protein kinase</keyword>
<keyword id="KW-0808">Transferase</keyword>
<keyword id="KW-0819">tRNA processing</keyword>
<gene>
    <name type="ordered locus">rrnAC2490</name>
</gene>
<name>KAE1B_HALMA</name>
<dbReference type="EC" id="2.3.1.234" evidence="1"/>
<dbReference type="EC" id="2.7.11.1" evidence="1"/>
<dbReference type="EMBL" id="AY596297">
    <property type="protein sequence ID" value="AAV47295.1"/>
    <property type="molecule type" value="Genomic_DNA"/>
</dbReference>
<dbReference type="EMBL" id="X70117">
    <property type="protein sequence ID" value="CAA49709.1"/>
    <property type="molecule type" value="Genomic_DNA"/>
</dbReference>
<dbReference type="PIR" id="S27037">
    <property type="entry name" value="S27037"/>
</dbReference>
<dbReference type="RefSeq" id="WP_011224258.1">
    <property type="nucleotide sequence ID" value="NC_006396.1"/>
</dbReference>
<dbReference type="SMR" id="P36174"/>
<dbReference type="STRING" id="272569.rrnAC2490"/>
<dbReference type="PaxDb" id="272569-rrnAC2490"/>
<dbReference type="EnsemblBacteria" id="AAV47295">
    <property type="protein sequence ID" value="AAV47295"/>
    <property type="gene ID" value="rrnAC2490"/>
</dbReference>
<dbReference type="GeneID" id="40153386"/>
<dbReference type="KEGG" id="hma:rrnAC2490"/>
<dbReference type="PATRIC" id="fig|272569.17.peg.3100"/>
<dbReference type="eggNOG" id="arCOG01185">
    <property type="taxonomic scope" value="Archaea"/>
</dbReference>
<dbReference type="HOGENOM" id="CLU_023208_2_2_2"/>
<dbReference type="Proteomes" id="UP000001169">
    <property type="component" value="Chromosome I"/>
</dbReference>
<dbReference type="GO" id="GO:0005737">
    <property type="term" value="C:cytoplasm"/>
    <property type="evidence" value="ECO:0007669"/>
    <property type="project" value="UniProtKB-SubCell"/>
</dbReference>
<dbReference type="GO" id="GO:0000408">
    <property type="term" value="C:EKC/KEOPS complex"/>
    <property type="evidence" value="ECO:0007669"/>
    <property type="project" value="InterPro"/>
</dbReference>
<dbReference type="GO" id="GO:0005524">
    <property type="term" value="F:ATP binding"/>
    <property type="evidence" value="ECO:0007669"/>
    <property type="project" value="UniProtKB-UniRule"/>
</dbReference>
<dbReference type="GO" id="GO:0005506">
    <property type="term" value="F:iron ion binding"/>
    <property type="evidence" value="ECO:0007669"/>
    <property type="project" value="UniProtKB-UniRule"/>
</dbReference>
<dbReference type="GO" id="GO:0004222">
    <property type="term" value="F:metalloendopeptidase activity"/>
    <property type="evidence" value="ECO:0007669"/>
    <property type="project" value="InterPro"/>
</dbReference>
<dbReference type="GO" id="GO:0061711">
    <property type="term" value="F:N(6)-L-threonylcarbamoyladenine synthase activity"/>
    <property type="evidence" value="ECO:0007669"/>
    <property type="project" value="UniProtKB-EC"/>
</dbReference>
<dbReference type="GO" id="GO:0106310">
    <property type="term" value="F:protein serine kinase activity"/>
    <property type="evidence" value="ECO:0007669"/>
    <property type="project" value="RHEA"/>
</dbReference>
<dbReference type="GO" id="GO:0004674">
    <property type="term" value="F:protein serine/threonine kinase activity"/>
    <property type="evidence" value="ECO:0007669"/>
    <property type="project" value="UniProtKB-KW"/>
</dbReference>
<dbReference type="GO" id="GO:0004712">
    <property type="term" value="F:protein serine/threonine/tyrosine kinase activity"/>
    <property type="evidence" value="ECO:0007669"/>
    <property type="project" value="UniProtKB-UniRule"/>
</dbReference>
<dbReference type="GO" id="GO:0008270">
    <property type="term" value="F:zinc ion binding"/>
    <property type="evidence" value="ECO:0007669"/>
    <property type="project" value="InterPro"/>
</dbReference>
<dbReference type="GO" id="GO:0002949">
    <property type="term" value="P:tRNA threonylcarbamoyladenosine modification"/>
    <property type="evidence" value="ECO:0007669"/>
    <property type="project" value="UniProtKB-UniRule"/>
</dbReference>
<dbReference type="Gene3D" id="3.30.420.40">
    <property type="match status" value="2"/>
</dbReference>
<dbReference type="Gene3D" id="3.30.200.20">
    <property type="entry name" value="Phosphorylase Kinase, domain 1"/>
    <property type="match status" value="1"/>
</dbReference>
<dbReference type="Gene3D" id="1.10.510.10">
    <property type="entry name" value="Transferase(Phosphotransferase) domain 1"/>
    <property type="match status" value="1"/>
</dbReference>
<dbReference type="HAMAP" id="MF_01446">
    <property type="entry name" value="Kae1"/>
    <property type="match status" value="1"/>
</dbReference>
<dbReference type="HAMAP" id="MF_01447">
    <property type="entry name" value="Kae1_Bud32_arch"/>
    <property type="match status" value="1"/>
</dbReference>
<dbReference type="InterPro" id="IPR043129">
    <property type="entry name" value="ATPase_NBD"/>
</dbReference>
<dbReference type="InterPro" id="IPR022495">
    <property type="entry name" value="Bud32"/>
</dbReference>
<dbReference type="InterPro" id="IPR000905">
    <property type="entry name" value="Gcp-like_dom"/>
</dbReference>
<dbReference type="InterPro" id="IPR017861">
    <property type="entry name" value="KAE1/TsaD"/>
</dbReference>
<dbReference type="InterPro" id="IPR034680">
    <property type="entry name" value="Kae1_archaea_euk"/>
</dbReference>
<dbReference type="InterPro" id="IPR011009">
    <property type="entry name" value="Kinase-like_dom_sf"/>
</dbReference>
<dbReference type="InterPro" id="IPR017860">
    <property type="entry name" value="Peptidase_M22_CS"/>
</dbReference>
<dbReference type="InterPro" id="IPR000719">
    <property type="entry name" value="Prot_kinase_dom"/>
</dbReference>
<dbReference type="InterPro" id="IPR009220">
    <property type="entry name" value="tRNA_threonyl_synthase/kinase"/>
</dbReference>
<dbReference type="NCBIfam" id="TIGR03724">
    <property type="entry name" value="arch_bud32"/>
    <property type="match status" value="1"/>
</dbReference>
<dbReference type="NCBIfam" id="TIGR03722">
    <property type="entry name" value="arch_KAE1"/>
    <property type="match status" value="1"/>
</dbReference>
<dbReference type="NCBIfam" id="TIGR00329">
    <property type="entry name" value="gcp_kae1"/>
    <property type="match status" value="1"/>
</dbReference>
<dbReference type="NCBIfam" id="NF007174">
    <property type="entry name" value="PRK09605.1"/>
    <property type="match status" value="1"/>
</dbReference>
<dbReference type="NCBIfam" id="NF011462">
    <property type="entry name" value="PRK14879.1-3"/>
    <property type="match status" value="1"/>
</dbReference>
<dbReference type="PANTHER" id="PTHR11735">
    <property type="entry name" value="TRNA N6-ADENOSINE THREONYLCARBAMOYLTRANSFERASE"/>
    <property type="match status" value="1"/>
</dbReference>
<dbReference type="PANTHER" id="PTHR11735:SF14">
    <property type="entry name" value="TRNA N6-ADENOSINE THREONYLCARBAMOYLTRANSFERASE"/>
    <property type="match status" value="1"/>
</dbReference>
<dbReference type="Pfam" id="PF00814">
    <property type="entry name" value="TsaD"/>
    <property type="match status" value="1"/>
</dbReference>
<dbReference type="PIRSF" id="PIRSF036401">
    <property type="entry name" value="Gcp_STYKS"/>
    <property type="match status" value="1"/>
</dbReference>
<dbReference type="PRINTS" id="PR00789">
    <property type="entry name" value="OSIALOPTASE"/>
</dbReference>
<dbReference type="SUPFAM" id="SSF53067">
    <property type="entry name" value="Actin-like ATPase domain"/>
    <property type="match status" value="1"/>
</dbReference>
<dbReference type="SUPFAM" id="SSF56112">
    <property type="entry name" value="Protein kinase-like (PK-like)"/>
    <property type="match status" value="1"/>
</dbReference>
<dbReference type="PROSITE" id="PS01016">
    <property type="entry name" value="GLYCOPROTEASE"/>
    <property type="match status" value="1"/>
</dbReference>
<dbReference type="PROSITE" id="PS50011">
    <property type="entry name" value="PROTEIN_KINASE_DOM"/>
    <property type="match status" value="1"/>
</dbReference>
<accession>P36174</accession>
<accession>Q5UZK8</accession>